<dbReference type="EMBL" id="AE017221">
    <property type="protein sequence ID" value="AAS81028.1"/>
    <property type="molecule type" value="Genomic_DNA"/>
</dbReference>
<dbReference type="RefSeq" id="WP_011173122.1">
    <property type="nucleotide sequence ID" value="NC_005835.1"/>
</dbReference>
<dbReference type="PDB" id="2F23">
    <property type="method" value="X-ray"/>
    <property type="resolution" value="1.60 A"/>
    <property type="chains" value="A/B=1-156"/>
</dbReference>
<dbReference type="PDBsum" id="2F23"/>
<dbReference type="SMR" id="Q72JT8"/>
<dbReference type="KEGG" id="tth:TT_C0680"/>
<dbReference type="eggNOG" id="COG0782">
    <property type="taxonomic scope" value="Bacteria"/>
</dbReference>
<dbReference type="HOGENOM" id="CLU_101379_2_1_0"/>
<dbReference type="OrthoDB" id="9808774at2"/>
<dbReference type="EvolutionaryTrace" id="Q72JT8"/>
<dbReference type="Proteomes" id="UP000000592">
    <property type="component" value="Chromosome"/>
</dbReference>
<dbReference type="GO" id="GO:0003677">
    <property type="term" value="F:DNA binding"/>
    <property type="evidence" value="ECO:0007669"/>
    <property type="project" value="InterPro"/>
</dbReference>
<dbReference type="GO" id="GO:0070063">
    <property type="term" value="F:RNA polymerase binding"/>
    <property type="evidence" value="ECO:0007669"/>
    <property type="project" value="InterPro"/>
</dbReference>
<dbReference type="GO" id="GO:0006354">
    <property type="term" value="P:DNA-templated transcription elongation"/>
    <property type="evidence" value="ECO:0007669"/>
    <property type="project" value="TreeGrafter"/>
</dbReference>
<dbReference type="GO" id="GO:0032784">
    <property type="term" value="P:regulation of DNA-templated transcription elongation"/>
    <property type="evidence" value="ECO:0007669"/>
    <property type="project" value="InterPro"/>
</dbReference>
<dbReference type="Gene3D" id="3.10.50.30">
    <property type="entry name" value="Transcription elongation factor, GreA/GreB, C-terminal domain"/>
    <property type="match status" value="1"/>
</dbReference>
<dbReference type="Gene3D" id="1.10.287.180">
    <property type="entry name" value="Transcription elongation factor, GreA/GreB, N-terminal domain"/>
    <property type="match status" value="1"/>
</dbReference>
<dbReference type="InterPro" id="IPR036953">
    <property type="entry name" value="GreA/GreB_C_sf"/>
</dbReference>
<dbReference type="InterPro" id="IPR018151">
    <property type="entry name" value="TF_GreA/GreB_CS"/>
</dbReference>
<dbReference type="InterPro" id="IPR001437">
    <property type="entry name" value="Tscrpt_elong_fac_GreA/B_C"/>
</dbReference>
<dbReference type="InterPro" id="IPR023459">
    <property type="entry name" value="Tscrpt_elong_fac_GreA/B_fam"/>
</dbReference>
<dbReference type="InterPro" id="IPR022691">
    <property type="entry name" value="Tscrpt_elong_fac_GreA/B_N"/>
</dbReference>
<dbReference type="InterPro" id="IPR036805">
    <property type="entry name" value="Tscrpt_elong_fac_GreA/B_N_sf"/>
</dbReference>
<dbReference type="PANTHER" id="PTHR30437">
    <property type="entry name" value="TRANSCRIPTION ELONGATION FACTOR GREA"/>
    <property type="match status" value="1"/>
</dbReference>
<dbReference type="PANTHER" id="PTHR30437:SF4">
    <property type="entry name" value="TRANSCRIPTION ELONGATION FACTOR GREA"/>
    <property type="match status" value="1"/>
</dbReference>
<dbReference type="Pfam" id="PF01272">
    <property type="entry name" value="GreA_GreB"/>
    <property type="match status" value="1"/>
</dbReference>
<dbReference type="Pfam" id="PF03449">
    <property type="entry name" value="GreA_GreB_N"/>
    <property type="match status" value="1"/>
</dbReference>
<dbReference type="PIRSF" id="PIRSF006092">
    <property type="entry name" value="GreA_GreB"/>
    <property type="match status" value="1"/>
</dbReference>
<dbReference type="SUPFAM" id="SSF54534">
    <property type="entry name" value="FKBP-like"/>
    <property type="match status" value="1"/>
</dbReference>
<dbReference type="SUPFAM" id="SSF46557">
    <property type="entry name" value="GreA transcript cleavage protein, N-terminal domain"/>
    <property type="match status" value="1"/>
</dbReference>
<dbReference type="PROSITE" id="PS00830">
    <property type="entry name" value="GREAB_2"/>
    <property type="match status" value="1"/>
</dbReference>
<proteinExistence type="evidence at protein level"/>
<gene>
    <name type="primary">gfh1</name>
    <name type="ordered locus">TT_C0680</name>
</gene>
<comment type="function">
    <text evidence="2">Inhibits all catalytic activities of RNA polymerase (RNAP) by partially occluding its substrate-binding site and preventing NTP binding.</text>
</comment>
<comment type="subunit">
    <text evidence="2">Interacts with RNAP.</text>
</comment>
<comment type="domain">
    <text evidence="2">Inhibitory activity is regulated via a pH-induced conformational change of the structure. At pH above 7, Gfh1 is in an inactive flipped orientation that prevents binding to RNAP. At lower pH, Gfh1 switches to an active orientation, which enables binding to RNAP and inhibitory activity.</text>
</comment>
<comment type="similarity">
    <text evidence="3">Belongs to the GreA/GreB family.</text>
</comment>
<keyword id="KW-0002">3D-structure</keyword>
<keyword id="KW-0175">Coiled coil</keyword>
<keyword id="KW-0804">Transcription</keyword>
<keyword id="KW-0805">Transcription regulation</keyword>
<organism>
    <name type="scientific">Thermus thermophilus (strain ATCC BAA-163 / DSM 7039 / HB27)</name>
    <dbReference type="NCBI Taxonomy" id="262724"/>
    <lineage>
        <taxon>Bacteria</taxon>
        <taxon>Thermotogati</taxon>
        <taxon>Deinococcota</taxon>
        <taxon>Deinococci</taxon>
        <taxon>Thermales</taxon>
        <taxon>Thermaceae</taxon>
        <taxon>Thermus</taxon>
    </lineage>
</organism>
<protein>
    <recommendedName>
        <fullName>Transcription inhibitor protein Gfh1</fullName>
    </recommendedName>
    <alternativeName>
        <fullName>Anti-cleavage anti-GreA transcription factor</fullName>
    </alternativeName>
    <alternativeName>
        <fullName>Gre factor homolog 1</fullName>
    </alternativeName>
</protein>
<evidence type="ECO:0000255" key="1"/>
<evidence type="ECO:0000269" key="2">
    <source>
    </source>
</evidence>
<evidence type="ECO:0000305" key="3"/>
<evidence type="ECO:0007829" key="4">
    <source>
        <dbReference type="PDB" id="2F23"/>
    </source>
</evidence>
<sequence>MAREVKLTKAGYERLMQQLERERERLQEATKILQELMESSDDYDDSGLEAAKQEKARIEARIDSLEDILSRAVILEEGSGEVIGLGSVVELEDPLSGERLSVQVVSPAEANVLDTPMKISDASPMGKALLGHRVGDVLSLDTPKGKREFRVVAIHG</sequence>
<accession>Q72JT8</accession>
<name>GFH1_THET2</name>
<feature type="chain" id="PRO_0000422248" description="Transcription inhibitor protein Gfh1">
    <location>
        <begin position="1"/>
        <end position="156"/>
    </location>
</feature>
<feature type="coiled-coil region" evidence="1">
    <location>
        <begin position="1"/>
        <end position="74"/>
    </location>
</feature>
<feature type="mutagenesis site" description="Lacks inhibitory activity and is insensitive to pH; when associated with C-135." evidence="2">
    <original>L</original>
    <variation>C</variation>
    <location>
        <position position="75"/>
    </location>
</feature>
<feature type="mutagenesis site" description="Strong inhibitory activity and insensitivity to pH; when associated with C-156." evidence="2">
    <original>E</original>
    <variation>C</variation>
    <location>
        <position position="77"/>
    </location>
</feature>
<feature type="mutagenesis site" description="Lacks inhibitory activity and is insensitive to pH; when associated with C-75." evidence="2">
    <original>G</original>
    <variation>C</variation>
    <location>
        <position position="135"/>
    </location>
</feature>
<feature type="mutagenesis site" description="Strong inhibitory activity and insensitivity to pH; when associated with C-77." evidence="2">
    <original>G</original>
    <variation>C</variation>
    <location>
        <position position="156"/>
    </location>
</feature>
<feature type="strand" evidence="4">
    <location>
        <begin position="5"/>
        <end position="7"/>
    </location>
</feature>
<feature type="helix" evidence="4">
    <location>
        <begin position="9"/>
        <end position="37"/>
    </location>
</feature>
<feature type="helix" evidence="4">
    <location>
        <begin position="46"/>
        <end position="71"/>
    </location>
</feature>
<feature type="strand" evidence="4">
    <location>
        <begin position="72"/>
        <end position="74"/>
    </location>
</feature>
<feature type="strand" evidence="4">
    <location>
        <begin position="88"/>
        <end position="92"/>
    </location>
</feature>
<feature type="turn" evidence="4">
    <location>
        <begin position="94"/>
        <end position="96"/>
    </location>
</feature>
<feature type="strand" evidence="4">
    <location>
        <begin position="99"/>
        <end position="105"/>
    </location>
</feature>
<feature type="helix" evidence="4">
    <location>
        <begin position="107"/>
        <end position="109"/>
    </location>
</feature>
<feature type="strand" evidence="4">
    <location>
        <begin position="114"/>
        <end position="120"/>
    </location>
</feature>
<feature type="helix" evidence="4">
    <location>
        <begin position="124"/>
        <end position="129"/>
    </location>
</feature>
<feature type="strand" evidence="4">
    <location>
        <begin position="137"/>
        <end position="142"/>
    </location>
</feature>
<feature type="strand" evidence="4">
    <location>
        <begin position="145"/>
        <end position="155"/>
    </location>
</feature>
<reference key="1">
    <citation type="journal article" date="2004" name="Nat. Biotechnol.">
        <title>The genome sequence of the extreme thermophile Thermus thermophilus.</title>
        <authorList>
            <person name="Henne A."/>
            <person name="Brueggemann H."/>
            <person name="Raasch C."/>
            <person name="Wiezer A."/>
            <person name="Hartsch T."/>
            <person name="Liesegang H."/>
            <person name="Johann A."/>
            <person name="Lienard T."/>
            <person name="Gohl O."/>
            <person name="Martinez-Arias R."/>
            <person name="Jacobi C."/>
            <person name="Starkuviene V."/>
            <person name="Schlenczeck S."/>
            <person name="Dencker S."/>
            <person name="Huber R."/>
            <person name="Klenk H.-P."/>
            <person name="Kramer W."/>
            <person name="Merkl R."/>
            <person name="Gottschalk G."/>
            <person name="Fritz H.-J."/>
        </authorList>
    </citation>
    <scope>NUCLEOTIDE SEQUENCE [LARGE SCALE GENOMIC DNA]</scope>
    <source>
        <strain>ATCC BAA-163 / DSM 7039 / HB27</strain>
    </source>
</reference>
<reference key="2">
    <citation type="journal article" date="2006" name="EMBO J.">
        <title>pH-dependent conformational switch activates the inhibitor of transcription elongation.</title>
        <authorList>
            <person name="Laptenko O."/>
            <person name="Kim S.S."/>
            <person name="Lee J."/>
            <person name="Starodubtseva M."/>
            <person name="Cava F."/>
            <person name="Berenguer J."/>
            <person name="Kong X.P."/>
            <person name="Borukhov S."/>
        </authorList>
    </citation>
    <scope>X-RAY CRYSTALLOGRAPHY (1.60 ANGSTROMS)</scope>
    <scope>FUNCTION</scope>
    <scope>INTERACTION WITH RNAP</scope>
    <scope>DOMAIN</scope>
    <scope>MUTAGENESIS OF LEU-75; GLU-77; GLY-135 AND GLY-156</scope>
    <source>
        <strain>ATCC BAA-163 / DSM 7039 / HB27</strain>
    </source>
</reference>